<evidence type="ECO:0000255" key="1">
    <source>
        <dbReference type="HAMAP-Rule" id="MF_00178"/>
    </source>
</evidence>
<accession>A6TM20</accession>
<name>RISB_ALKMQ</name>
<organism>
    <name type="scientific">Alkaliphilus metalliredigens (strain QYMF)</name>
    <dbReference type="NCBI Taxonomy" id="293826"/>
    <lineage>
        <taxon>Bacteria</taxon>
        <taxon>Bacillati</taxon>
        <taxon>Bacillota</taxon>
        <taxon>Clostridia</taxon>
        <taxon>Peptostreptococcales</taxon>
        <taxon>Natronincolaceae</taxon>
        <taxon>Alkaliphilus</taxon>
    </lineage>
</organism>
<sequence>MRVYEGKLISKGQKFGIIVGRFNEFIGGKLLSGAIDALKRHGVDEENIEIAWVPGAFEMPLIAKKMAKSQKYDGVICLGAVIRGATPHFDYVSSEVTKGVASVSLETEVPVIFGVLTTDTIEQAIERAGTKAGNKGFEAAVTAIEMANLLKEF</sequence>
<protein>
    <recommendedName>
        <fullName evidence="1">6,7-dimethyl-8-ribityllumazine synthase</fullName>
        <shortName evidence="1">DMRL synthase</shortName>
        <shortName evidence="1">LS</shortName>
        <shortName evidence="1">Lumazine synthase</shortName>
        <ecNumber evidence="1">2.5.1.78</ecNumber>
    </recommendedName>
</protein>
<keyword id="KW-1185">Reference proteome</keyword>
<keyword id="KW-0686">Riboflavin biosynthesis</keyword>
<keyword id="KW-0808">Transferase</keyword>
<gene>
    <name evidence="1" type="primary">ribH</name>
    <name type="ordered locus">Amet_1021</name>
</gene>
<comment type="function">
    <text evidence="1">Catalyzes the formation of 6,7-dimethyl-8-ribityllumazine by condensation of 5-amino-6-(D-ribitylamino)uracil with 3,4-dihydroxy-2-butanone 4-phosphate. This is the penultimate step in the biosynthesis of riboflavin.</text>
</comment>
<comment type="catalytic activity">
    <reaction evidence="1">
        <text>(2S)-2-hydroxy-3-oxobutyl phosphate + 5-amino-6-(D-ribitylamino)uracil = 6,7-dimethyl-8-(1-D-ribityl)lumazine + phosphate + 2 H2O + H(+)</text>
        <dbReference type="Rhea" id="RHEA:26152"/>
        <dbReference type="ChEBI" id="CHEBI:15377"/>
        <dbReference type="ChEBI" id="CHEBI:15378"/>
        <dbReference type="ChEBI" id="CHEBI:15934"/>
        <dbReference type="ChEBI" id="CHEBI:43474"/>
        <dbReference type="ChEBI" id="CHEBI:58201"/>
        <dbReference type="ChEBI" id="CHEBI:58830"/>
        <dbReference type="EC" id="2.5.1.78"/>
    </reaction>
</comment>
<comment type="pathway">
    <text evidence="1">Cofactor biosynthesis; riboflavin biosynthesis; riboflavin from 2-hydroxy-3-oxobutyl phosphate and 5-amino-6-(D-ribitylamino)uracil: step 1/2.</text>
</comment>
<comment type="similarity">
    <text evidence="1">Belongs to the DMRL synthase family.</text>
</comment>
<dbReference type="EC" id="2.5.1.78" evidence="1"/>
<dbReference type="EMBL" id="CP000724">
    <property type="protein sequence ID" value="ABR47238.1"/>
    <property type="molecule type" value="Genomic_DNA"/>
</dbReference>
<dbReference type="RefSeq" id="WP_012062280.1">
    <property type="nucleotide sequence ID" value="NC_009633.1"/>
</dbReference>
<dbReference type="SMR" id="A6TM20"/>
<dbReference type="STRING" id="293826.Amet_1021"/>
<dbReference type="KEGG" id="amt:Amet_1021"/>
<dbReference type="eggNOG" id="COG0054">
    <property type="taxonomic scope" value="Bacteria"/>
</dbReference>
<dbReference type="HOGENOM" id="CLU_089358_1_1_9"/>
<dbReference type="OrthoDB" id="9809709at2"/>
<dbReference type="UniPathway" id="UPA00275">
    <property type="reaction ID" value="UER00404"/>
</dbReference>
<dbReference type="Proteomes" id="UP000001572">
    <property type="component" value="Chromosome"/>
</dbReference>
<dbReference type="GO" id="GO:0005829">
    <property type="term" value="C:cytosol"/>
    <property type="evidence" value="ECO:0007669"/>
    <property type="project" value="TreeGrafter"/>
</dbReference>
<dbReference type="GO" id="GO:0009349">
    <property type="term" value="C:riboflavin synthase complex"/>
    <property type="evidence" value="ECO:0007669"/>
    <property type="project" value="InterPro"/>
</dbReference>
<dbReference type="GO" id="GO:0000906">
    <property type="term" value="F:6,7-dimethyl-8-ribityllumazine synthase activity"/>
    <property type="evidence" value="ECO:0007669"/>
    <property type="project" value="UniProtKB-UniRule"/>
</dbReference>
<dbReference type="GO" id="GO:0009231">
    <property type="term" value="P:riboflavin biosynthetic process"/>
    <property type="evidence" value="ECO:0007669"/>
    <property type="project" value="UniProtKB-UniRule"/>
</dbReference>
<dbReference type="CDD" id="cd09209">
    <property type="entry name" value="Lumazine_synthase-I"/>
    <property type="match status" value="1"/>
</dbReference>
<dbReference type="FunFam" id="3.40.50.960:FF:000001">
    <property type="entry name" value="6,7-dimethyl-8-ribityllumazine synthase"/>
    <property type="match status" value="1"/>
</dbReference>
<dbReference type="Gene3D" id="3.40.50.960">
    <property type="entry name" value="Lumazine/riboflavin synthase"/>
    <property type="match status" value="1"/>
</dbReference>
<dbReference type="HAMAP" id="MF_00178">
    <property type="entry name" value="Lumazine_synth"/>
    <property type="match status" value="1"/>
</dbReference>
<dbReference type="InterPro" id="IPR034964">
    <property type="entry name" value="LS"/>
</dbReference>
<dbReference type="InterPro" id="IPR002180">
    <property type="entry name" value="LS/RS"/>
</dbReference>
<dbReference type="InterPro" id="IPR036467">
    <property type="entry name" value="LS/RS_sf"/>
</dbReference>
<dbReference type="NCBIfam" id="TIGR00114">
    <property type="entry name" value="lumazine-synth"/>
    <property type="match status" value="1"/>
</dbReference>
<dbReference type="NCBIfam" id="NF000812">
    <property type="entry name" value="PRK00061.1-4"/>
    <property type="match status" value="1"/>
</dbReference>
<dbReference type="PANTHER" id="PTHR21058:SF0">
    <property type="entry name" value="6,7-DIMETHYL-8-RIBITYLLUMAZINE SYNTHASE"/>
    <property type="match status" value="1"/>
</dbReference>
<dbReference type="PANTHER" id="PTHR21058">
    <property type="entry name" value="6,7-DIMETHYL-8-RIBITYLLUMAZINE SYNTHASE DMRL SYNTHASE LUMAZINE SYNTHASE"/>
    <property type="match status" value="1"/>
</dbReference>
<dbReference type="Pfam" id="PF00885">
    <property type="entry name" value="DMRL_synthase"/>
    <property type="match status" value="1"/>
</dbReference>
<dbReference type="SUPFAM" id="SSF52121">
    <property type="entry name" value="Lumazine synthase"/>
    <property type="match status" value="1"/>
</dbReference>
<reference key="1">
    <citation type="journal article" date="2016" name="Genome Announc.">
        <title>Complete genome sequence of Alkaliphilus metalliredigens strain QYMF, an alkaliphilic and metal-reducing bacterium isolated from borax-contaminated leachate ponds.</title>
        <authorList>
            <person name="Hwang C."/>
            <person name="Copeland A."/>
            <person name="Lucas S."/>
            <person name="Lapidus A."/>
            <person name="Barry K."/>
            <person name="Detter J.C."/>
            <person name="Glavina Del Rio T."/>
            <person name="Hammon N."/>
            <person name="Israni S."/>
            <person name="Dalin E."/>
            <person name="Tice H."/>
            <person name="Pitluck S."/>
            <person name="Chertkov O."/>
            <person name="Brettin T."/>
            <person name="Bruce D."/>
            <person name="Han C."/>
            <person name="Schmutz J."/>
            <person name="Larimer F."/>
            <person name="Land M.L."/>
            <person name="Hauser L."/>
            <person name="Kyrpides N."/>
            <person name="Mikhailova N."/>
            <person name="Ye Q."/>
            <person name="Zhou J."/>
            <person name="Richardson P."/>
            <person name="Fields M.W."/>
        </authorList>
    </citation>
    <scope>NUCLEOTIDE SEQUENCE [LARGE SCALE GENOMIC DNA]</scope>
    <source>
        <strain>QYMF</strain>
    </source>
</reference>
<feature type="chain" id="PRO_1000058362" description="6,7-dimethyl-8-ribityllumazine synthase">
    <location>
        <begin position="1"/>
        <end position="153"/>
    </location>
</feature>
<feature type="active site" description="Proton donor" evidence="1">
    <location>
        <position position="88"/>
    </location>
</feature>
<feature type="binding site" evidence="1">
    <location>
        <position position="22"/>
    </location>
    <ligand>
        <name>5-amino-6-(D-ribitylamino)uracil</name>
        <dbReference type="ChEBI" id="CHEBI:15934"/>
    </ligand>
</feature>
<feature type="binding site" evidence="1">
    <location>
        <begin position="56"/>
        <end position="58"/>
    </location>
    <ligand>
        <name>5-amino-6-(D-ribitylamino)uracil</name>
        <dbReference type="ChEBI" id="CHEBI:15934"/>
    </ligand>
</feature>
<feature type="binding site" evidence="1">
    <location>
        <begin position="80"/>
        <end position="82"/>
    </location>
    <ligand>
        <name>5-amino-6-(D-ribitylamino)uracil</name>
        <dbReference type="ChEBI" id="CHEBI:15934"/>
    </ligand>
</feature>
<feature type="binding site" evidence="1">
    <location>
        <begin position="85"/>
        <end position="86"/>
    </location>
    <ligand>
        <name>(2S)-2-hydroxy-3-oxobutyl phosphate</name>
        <dbReference type="ChEBI" id="CHEBI:58830"/>
    </ligand>
</feature>
<feature type="binding site" evidence="1">
    <location>
        <position position="113"/>
    </location>
    <ligand>
        <name>5-amino-6-(D-ribitylamino)uracil</name>
        <dbReference type="ChEBI" id="CHEBI:15934"/>
    </ligand>
</feature>
<feature type="binding site" evidence="1">
    <location>
        <position position="127"/>
    </location>
    <ligand>
        <name>(2S)-2-hydroxy-3-oxobutyl phosphate</name>
        <dbReference type="ChEBI" id="CHEBI:58830"/>
    </ligand>
</feature>
<proteinExistence type="inferred from homology"/>